<sequence length="424" mass="46356">MTDKRKDGSGKLLYCSFCGKSQHEVRKLIAGPSVYICDECVDLCNDIIREEIKEVAPHRERSALPTPHEIRNHLDDYVIGQEQAKKVLAVAVYNHYKRLRNGDTSNGVELGKSNILLIGPTGSGKTLLAETLARLLDVPFTMADATTLTEAGYVGEDVENIIQKLLQKCDYDVQKAQRGIVYIDEIDKISRKSDNPSITRDVSGEGVQQALLKLIEGTVAAVPPQGGRKHPQQEFLQVDTSKILFICGGAFAGLDKVISHRVETGSGIGFGATVKAKSDKASEGELLAQVEPEDLIKFGLIPEFIGRLPVVATLNELSEEALIQILKEPKNALTKQYQALFNLEGVDLEFRDEALDAIAKKAMARKTGARGLRSIVEAALLDTMYDLPSMEDVEKVVIDESVIDGQSKPLLIYGKPEAQQASGE</sequence>
<comment type="function">
    <text evidence="1">ATP-dependent specificity component of the Clp protease. It directs the protease to specific substrates. Can perform chaperone functions in the absence of ClpP.</text>
</comment>
<comment type="subunit">
    <text evidence="1">Component of the ClpX-ClpP complex. Forms a hexameric ring that, in the presence of ATP, binds to fourteen ClpP subunits assembled into a disk-like structure with a central cavity, resembling the structure of eukaryotic proteasomes.</text>
</comment>
<comment type="similarity">
    <text evidence="1">Belongs to the ClpX chaperone family.</text>
</comment>
<accession>B2U4P3</accession>
<organism>
    <name type="scientific">Shigella boydii serotype 18 (strain CDC 3083-94 / BS512)</name>
    <dbReference type="NCBI Taxonomy" id="344609"/>
    <lineage>
        <taxon>Bacteria</taxon>
        <taxon>Pseudomonadati</taxon>
        <taxon>Pseudomonadota</taxon>
        <taxon>Gammaproteobacteria</taxon>
        <taxon>Enterobacterales</taxon>
        <taxon>Enterobacteriaceae</taxon>
        <taxon>Shigella</taxon>
    </lineage>
</organism>
<protein>
    <recommendedName>
        <fullName evidence="1">ATP-dependent Clp protease ATP-binding subunit ClpX</fullName>
    </recommendedName>
</protein>
<feature type="chain" id="PRO_1000098002" description="ATP-dependent Clp protease ATP-binding subunit ClpX">
    <location>
        <begin position="1"/>
        <end position="424"/>
    </location>
</feature>
<feature type="domain" description="ClpX-type ZB" evidence="2">
    <location>
        <begin position="2"/>
        <end position="56"/>
    </location>
</feature>
<feature type="binding site" evidence="2">
    <location>
        <position position="15"/>
    </location>
    <ligand>
        <name>Zn(2+)</name>
        <dbReference type="ChEBI" id="CHEBI:29105"/>
    </ligand>
</feature>
<feature type="binding site" evidence="2">
    <location>
        <position position="18"/>
    </location>
    <ligand>
        <name>Zn(2+)</name>
        <dbReference type="ChEBI" id="CHEBI:29105"/>
    </ligand>
</feature>
<feature type="binding site" evidence="2">
    <location>
        <position position="37"/>
    </location>
    <ligand>
        <name>Zn(2+)</name>
        <dbReference type="ChEBI" id="CHEBI:29105"/>
    </ligand>
</feature>
<feature type="binding site" evidence="2">
    <location>
        <position position="40"/>
    </location>
    <ligand>
        <name>Zn(2+)</name>
        <dbReference type="ChEBI" id="CHEBI:29105"/>
    </ligand>
</feature>
<feature type="binding site" evidence="1">
    <location>
        <begin position="120"/>
        <end position="127"/>
    </location>
    <ligand>
        <name>ATP</name>
        <dbReference type="ChEBI" id="CHEBI:30616"/>
    </ligand>
</feature>
<dbReference type="EMBL" id="CP001063">
    <property type="protein sequence ID" value="ACD07059.1"/>
    <property type="molecule type" value="Genomic_DNA"/>
</dbReference>
<dbReference type="RefSeq" id="WP_000130305.1">
    <property type="nucleotide sequence ID" value="NC_010658.1"/>
</dbReference>
<dbReference type="SMR" id="B2U4P3"/>
<dbReference type="STRING" id="344609.SbBS512_E0361"/>
<dbReference type="GeneID" id="93777016"/>
<dbReference type="KEGG" id="sbc:SbBS512_E0361"/>
<dbReference type="HOGENOM" id="CLU_014218_8_2_6"/>
<dbReference type="Proteomes" id="UP000001030">
    <property type="component" value="Chromosome"/>
</dbReference>
<dbReference type="GO" id="GO:0009376">
    <property type="term" value="C:HslUV protease complex"/>
    <property type="evidence" value="ECO:0007669"/>
    <property type="project" value="TreeGrafter"/>
</dbReference>
<dbReference type="GO" id="GO:0005524">
    <property type="term" value="F:ATP binding"/>
    <property type="evidence" value="ECO:0007669"/>
    <property type="project" value="UniProtKB-UniRule"/>
</dbReference>
<dbReference type="GO" id="GO:0016887">
    <property type="term" value="F:ATP hydrolysis activity"/>
    <property type="evidence" value="ECO:0007669"/>
    <property type="project" value="InterPro"/>
</dbReference>
<dbReference type="GO" id="GO:0140662">
    <property type="term" value="F:ATP-dependent protein folding chaperone"/>
    <property type="evidence" value="ECO:0007669"/>
    <property type="project" value="InterPro"/>
</dbReference>
<dbReference type="GO" id="GO:0046983">
    <property type="term" value="F:protein dimerization activity"/>
    <property type="evidence" value="ECO:0007669"/>
    <property type="project" value="InterPro"/>
</dbReference>
<dbReference type="GO" id="GO:0051082">
    <property type="term" value="F:unfolded protein binding"/>
    <property type="evidence" value="ECO:0007669"/>
    <property type="project" value="UniProtKB-UniRule"/>
</dbReference>
<dbReference type="GO" id="GO:0008270">
    <property type="term" value="F:zinc ion binding"/>
    <property type="evidence" value="ECO:0007669"/>
    <property type="project" value="InterPro"/>
</dbReference>
<dbReference type="GO" id="GO:0051301">
    <property type="term" value="P:cell division"/>
    <property type="evidence" value="ECO:0007669"/>
    <property type="project" value="TreeGrafter"/>
</dbReference>
<dbReference type="GO" id="GO:0051603">
    <property type="term" value="P:proteolysis involved in protein catabolic process"/>
    <property type="evidence" value="ECO:0007669"/>
    <property type="project" value="TreeGrafter"/>
</dbReference>
<dbReference type="CDD" id="cd19497">
    <property type="entry name" value="RecA-like_ClpX"/>
    <property type="match status" value="1"/>
</dbReference>
<dbReference type="FunFam" id="1.10.8.60:FF:000002">
    <property type="entry name" value="ATP-dependent Clp protease ATP-binding subunit ClpX"/>
    <property type="match status" value="1"/>
</dbReference>
<dbReference type="FunFam" id="3.40.50.300:FF:000005">
    <property type="entry name" value="ATP-dependent Clp protease ATP-binding subunit ClpX"/>
    <property type="match status" value="1"/>
</dbReference>
<dbReference type="Gene3D" id="1.10.8.60">
    <property type="match status" value="1"/>
</dbReference>
<dbReference type="Gene3D" id="6.20.220.10">
    <property type="entry name" value="ClpX chaperone, C4-type zinc finger domain"/>
    <property type="match status" value="1"/>
</dbReference>
<dbReference type="Gene3D" id="3.40.50.300">
    <property type="entry name" value="P-loop containing nucleotide triphosphate hydrolases"/>
    <property type="match status" value="1"/>
</dbReference>
<dbReference type="HAMAP" id="MF_00175">
    <property type="entry name" value="ClpX"/>
    <property type="match status" value="1"/>
</dbReference>
<dbReference type="InterPro" id="IPR003593">
    <property type="entry name" value="AAA+_ATPase"/>
</dbReference>
<dbReference type="InterPro" id="IPR050052">
    <property type="entry name" value="ATP-dep_Clp_protease_ClpX"/>
</dbReference>
<dbReference type="InterPro" id="IPR003959">
    <property type="entry name" value="ATPase_AAA_core"/>
</dbReference>
<dbReference type="InterPro" id="IPR019489">
    <property type="entry name" value="Clp_ATPase_C"/>
</dbReference>
<dbReference type="InterPro" id="IPR004487">
    <property type="entry name" value="Clp_protease_ATP-bd_su_ClpX"/>
</dbReference>
<dbReference type="InterPro" id="IPR046425">
    <property type="entry name" value="ClpX_bact"/>
</dbReference>
<dbReference type="InterPro" id="IPR027417">
    <property type="entry name" value="P-loop_NTPase"/>
</dbReference>
<dbReference type="InterPro" id="IPR010603">
    <property type="entry name" value="Znf_CppX_C4"/>
</dbReference>
<dbReference type="InterPro" id="IPR038366">
    <property type="entry name" value="Znf_CppX_C4_sf"/>
</dbReference>
<dbReference type="NCBIfam" id="TIGR00382">
    <property type="entry name" value="clpX"/>
    <property type="match status" value="1"/>
</dbReference>
<dbReference type="NCBIfam" id="NF003745">
    <property type="entry name" value="PRK05342.1"/>
    <property type="match status" value="1"/>
</dbReference>
<dbReference type="PANTHER" id="PTHR48102:SF7">
    <property type="entry name" value="ATP-DEPENDENT CLP PROTEASE ATP-BINDING SUBUNIT CLPX-LIKE, MITOCHONDRIAL"/>
    <property type="match status" value="1"/>
</dbReference>
<dbReference type="PANTHER" id="PTHR48102">
    <property type="entry name" value="ATP-DEPENDENT CLP PROTEASE ATP-BINDING SUBUNIT CLPX-LIKE, MITOCHONDRIAL-RELATED"/>
    <property type="match status" value="1"/>
</dbReference>
<dbReference type="Pfam" id="PF07724">
    <property type="entry name" value="AAA_2"/>
    <property type="match status" value="1"/>
</dbReference>
<dbReference type="Pfam" id="PF10431">
    <property type="entry name" value="ClpB_D2-small"/>
    <property type="match status" value="1"/>
</dbReference>
<dbReference type="Pfam" id="PF06689">
    <property type="entry name" value="zf-C4_ClpX"/>
    <property type="match status" value="1"/>
</dbReference>
<dbReference type="SMART" id="SM00382">
    <property type="entry name" value="AAA"/>
    <property type="match status" value="1"/>
</dbReference>
<dbReference type="SMART" id="SM01086">
    <property type="entry name" value="ClpB_D2-small"/>
    <property type="match status" value="1"/>
</dbReference>
<dbReference type="SMART" id="SM00994">
    <property type="entry name" value="zf-C4_ClpX"/>
    <property type="match status" value="1"/>
</dbReference>
<dbReference type="SUPFAM" id="SSF57716">
    <property type="entry name" value="Glucocorticoid receptor-like (DNA-binding domain)"/>
    <property type="match status" value="1"/>
</dbReference>
<dbReference type="SUPFAM" id="SSF52540">
    <property type="entry name" value="P-loop containing nucleoside triphosphate hydrolases"/>
    <property type="match status" value="1"/>
</dbReference>
<dbReference type="PROSITE" id="PS51902">
    <property type="entry name" value="CLPX_ZB"/>
    <property type="match status" value="1"/>
</dbReference>
<gene>
    <name evidence="1" type="primary">clpX</name>
    <name type="ordered locus">SbBS512_E0361</name>
</gene>
<proteinExistence type="inferred from homology"/>
<keyword id="KW-0067">ATP-binding</keyword>
<keyword id="KW-0143">Chaperone</keyword>
<keyword id="KW-0479">Metal-binding</keyword>
<keyword id="KW-0547">Nucleotide-binding</keyword>
<keyword id="KW-1185">Reference proteome</keyword>
<keyword id="KW-0862">Zinc</keyword>
<reference key="1">
    <citation type="submission" date="2008-05" db="EMBL/GenBank/DDBJ databases">
        <title>Complete sequence of Shigella boydii serotype 18 strain BS512.</title>
        <authorList>
            <person name="Rasko D.A."/>
            <person name="Rosovitz M."/>
            <person name="Maurelli A.T."/>
            <person name="Myers G."/>
            <person name="Seshadri R."/>
            <person name="Cer R."/>
            <person name="Jiang L."/>
            <person name="Ravel J."/>
            <person name="Sebastian Y."/>
        </authorList>
    </citation>
    <scope>NUCLEOTIDE SEQUENCE [LARGE SCALE GENOMIC DNA]</scope>
    <source>
        <strain>CDC 3083-94 / BS512</strain>
    </source>
</reference>
<name>CLPX_SHIB3</name>
<evidence type="ECO:0000255" key="1">
    <source>
        <dbReference type="HAMAP-Rule" id="MF_00175"/>
    </source>
</evidence>
<evidence type="ECO:0000255" key="2">
    <source>
        <dbReference type="PROSITE-ProRule" id="PRU01250"/>
    </source>
</evidence>